<name>PSRP_YERP3</name>
<feature type="chain" id="PRO_0000316761" description="Putative phosphoenolpyruvate synthase regulatory protein">
    <location>
        <begin position="1"/>
        <end position="273"/>
    </location>
</feature>
<feature type="binding site" evidence="1">
    <location>
        <begin position="153"/>
        <end position="160"/>
    </location>
    <ligand>
        <name>ADP</name>
        <dbReference type="ChEBI" id="CHEBI:456216"/>
    </ligand>
</feature>
<organism>
    <name type="scientific">Yersinia pseudotuberculosis serotype O:1b (strain IP 31758)</name>
    <dbReference type="NCBI Taxonomy" id="349747"/>
    <lineage>
        <taxon>Bacteria</taxon>
        <taxon>Pseudomonadati</taxon>
        <taxon>Pseudomonadota</taxon>
        <taxon>Gammaproteobacteria</taxon>
        <taxon>Enterobacterales</taxon>
        <taxon>Yersiniaceae</taxon>
        <taxon>Yersinia</taxon>
    </lineage>
</organism>
<accession>A7FHI3</accession>
<keyword id="KW-0418">Kinase</keyword>
<keyword id="KW-0547">Nucleotide-binding</keyword>
<keyword id="KW-0723">Serine/threonine-protein kinase</keyword>
<keyword id="KW-0808">Transferase</keyword>
<dbReference type="EC" id="2.7.11.33" evidence="1"/>
<dbReference type="EC" id="2.7.4.28" evidence="1"/>
<dbReference type="EMBL" id="CP000720">
    <property type="protein sequence ID" value="ABS47484.1"/>
    <property type="molecule type" value="Genomic_DNA"/>
</dbReference>
<dbReference type="RefSeq" id="WP_002211814.1">
    <property type="nucleotide sequence ID" value="NC_009708.1"/>
</dbReference>
<dbReference type="SMR" id="A7FHI3"/>
<dbReference type="KEGG" id="ypi:YpsIP31758_1736"/>
<dbReference type="HOGENOM" id="CLU_046206_1_0_6"/>
<dbReference type="Proteomes" id="UP000002412">
    <property type="component" value="Chromosome"/>
</dbReference>
<dbReference type="GO" id="GO:0043531">
    <property type="term" value="F:ADP binding"/>
    <property type="evidence" value="ECO:0007669"/>
    <property type="project" value="UniProtKB-UniRule"/>
</dbReference>
<dbReference type="GO" id="GO:0005524">
    <property type="term" value="F:ATP binding"/>
    <property type="evidence" value="ECO:0007669"/>
    <property type="project" value="InterPro"/>
</dbReference>
<dbReference type="GO" id="GO:0003677">
    <property type="term" value="F:DNA binding"/>
    <property type="evidence" value="ECO:0007669"/>
    <property type="project" value="InterPro"/>
</dbReference>
<dbReference type="GO" id="GO:0016776">
    <property type="term" value="F:phosphotransferase activity, phosphate group as acceptor"/>
    <property type="evidence" value="ECO:0007669"/>
    <property type="project" value="UniProtKB-UniRule"/>
</dbReference>
<dbReference type="GO" id="GO:0004674">
    <property type="term" value="F:protein serine/threonine kinase activity"/>
    <property type="evidence" value="ECO:0007669"/>
    <property type="project" value="UniProtKB-UniRule"/>
</dbReference>
<dbReference type="GO" id="GO:0006355">
    <property type="term" value="P:regulation of DNA-templated transcription"/>
    <property type="evidence" value="ECO:0007669"/>
    <property type="project" value="InterPro"/>
</dbReference>
<dbReference type="HAMAP" id="MF_01062">
    <property type="entry name" value="PSRP"/>
    <property type="match status" value="1"/>
</dbReference>
<dbReference type="InterPro" id="IPR005177">
    <property type="entry name" value="Kinase-pyrophosphorylase"/>
</dbReference>
<dbReference type="InterPro" id="IPR026530">
    <property type="entry name" value="PSRP"/>
</dbReference>
<dbReference type="InterPro" id="IPR008917">
    <property type="entry name" value="TF_DNA-bd_sf"/>
</dbReference>
<dbReference type="NCBIfam" id="NF003742">
    <property type="entry name" value="PRK05339.1"/>
    <property type="match status" value="1"/>
</dbReference>
<dbReference type="PANTHER" id="PTHR31756">
    <property type="entry name" value="PYRUVATE, PHOSPHATE DIKINASE REGULATORY PROTEIN 1, CHLOROPLASTIC"/>
    <property type="match status" value="1"/>
</dbReference>
<dbReference type="PANTHER" id="PTHR31756:SF3">
    <property type="entry name" value="PYRUVATE, PHOSPHATE DIKINASE REGULATORY PROTEIN 1, CHLOROPLASTIC"/>
    <property type="match status" value="1"/>
</dbReference>
<dbReference type="Pfam" id="PF03618">
    <property type="entry name" value="Kinase-PPPase"/>
    <property type="match status" value="1"/>
</dbReference>
<dbReference type="SUPFAM" id="SSF47454">
    <property type="entry name" value="A DNA-binding domain in eukaryotic transcription factors"/>
    <property type="match status" value="1"/>
</dbReference>
<sequence length="273" mass="30731">MERCVFYISDGTAITAEVLGHAVLSQFPINVTTFTLPFVENAARAQSVCKQINEIYQDTGVRPLVFYSIISLEVREIIQRSEGFCQDIVQALVAPLQGELGVPPQPVLNRTHGLTESNLDKYDARIAAIDYALAHDDGISLRNLDQAQVILLGVSRCGKTPTSLYLAMQFGIRAANYPFIADDMDNLQLPAALKPFQHKLFGLTINPERLAAIREERRENSRYASLRQCRMEVGEVEALFRKNQIRYLNSTNYSVEEISTKILDILGMSRRMF</sequence>
<evidence type="ECO:0000255" key="1">
    <source>
        <dbReference type="HAMAP-Rule" id="MF_01062"/>
    </source>
</evidence>
<proteinExistence type="inferred from homology"/>
<reference key="1">
    <citation type="journal article" date="2007" name="PLoS Genet.">
        <title>The complete genome sequence of Yersinia pseudotuberculosis IP31758, the causative agent of Far East scarlet-like fever.</title>
        <authorList>
            <person name="Eppinger M."/>
            <person name="Rosovitz M.J."/>
            <person name="Fricke W.F."/>
            <person name="Rasko D.A."/>
            <person name="Kokorina G."/>
            <person name="Fayolle C."/>
            <person name="Lindler L.E."/>
            <person name="Carniel E."/>
            <person name="Ravel J."/>
        </authorList>
    </citation>
    <scope>NUCLEOTIDE SEQUENCE [LARGE SCALE GENOMIC DNA]</scope>
    <source>
        <strain>IP 31758</strain>
    </source>
</reference>
<gene>
    <name type="ordered locus">YpsIP31758_1736</name>
</gene>
<comment type="function">
    <text evidence="1">Bifunctional serine/threonine kinase and phosphorylase involved in the regulation of the phosphoenolpyruvate synthase (PEPS) by catalyzing its phosphorylation/dephosphorylation.</text>
</comment>
<comment type="catalytic activity">
    <reaction evidence="1">
        <text>[pyruvate, water dikinase] + ADP = [pyruvate, water dikinase]-phosphate + AMP + H(+)</text>
        <dbReference type="Rhea" id="RHEA:46020"/>
        <dbReference type="Rhea" id="RHEA-COMP:11425"/>
        <dbReference type="Rhea" id="RHEA-COMP:11426"/>
        <dbReference type="ChEBI" id="CHEBI:15378"/>
        <dbReference type="ChEBI" id="CHEBI:43176"/>
        <dbReference type="ChEBI" id="CHEBI:68546"/>
        <dbReference type="ChEBI" id="CHEBI:456215"/>
        <dbReference type="ChEBI" id="CHEBI:456216"/>
        <dbReference type="EC" id="2.7.11.33"/>
    </reaction>
</comment>
<comment type="catalytic activity">
    <reaction evidence="1">
        <text>[pyruvate, water dikinase]-phosphate + phosphate + H(+) = [pyruvate, water dikinase] + diphosphate</text>
        <dbReference type="Rhea" id="RHEA:48580"/>
        <dbReference type="Rhea" id="RHEA-COMP:11425"/>
        <dbReference type="Rhea" id="RHEA-COMP:11426"/>
        <dbReference type="ChEBI" id="CHEBI:15378"/>
        <dbReference type="ChEBI" id="CHEBI:33019"/>
        <dbReference type="ChEBI" id="CHEBI:43176"/>
        <dbReference type="ChEBI" id="CHEBI:43474"/>
        <dbReference type="ChEBI" id="CHEBI:68546"/>
        <dbReference type="EC" id="2.7.4.28"/>
    </reaction>
</comment>
<comment type="similarity">
    <text evidence="1">Belongs to the pyruvate, phosphate/water dikinase regulatory protein family. PSRP subfamily.</text>
</comment>
<protein>
    <recommendedName>
        <fullName evidence="1">Putative phosphoenolpyruvate synthase regulatory protein</fullName>
        <shortName evidence="1">PEP synthase regulatory protein</shortName>
        <shortName evidence="1">PSRP</shortName>
        <ecNumber evidence="1">2.7.11.33</ecNumber>
        <ecNumber evidence="1">2.7.4.28</ecNumber>
    </recommendedName>
    <alternativeName>
        <fullName evidence="1">Pyruvate, water dikinase regulatory protein</fullName>
    </alternativeName>
</protein>